<keyword id="KW-0456">Lyase</keyword>
<keyword id="KW-0464">Manganese</keyword>
<keyword id="KW-0479">Metal-binding</keyword>
<keyword id="KW-0520">NAD</keyword>
<dbReference type="EC" id="4.1.1.101" evidence="3"/>
<dbReference type="EMBL" id="JRGZ01000002">
    <property type="protein sequence ID" value="KGB50834.1"/>
    <property type="molecule type" value="Genomic_DNA"/>
</dbReference>
<dbReference type="SMR" id="A0A095AMW7"/>
<dbReference type="GO" id="GO:0005829">
    <property type="term" value="C:cytosol"/>
    <property type="evidence" value="ECO:0007669"/>
    <property type="project" value="TreeGrafter"/>
</dbReference>
<dbReference type="GO" id="GO:0016831">
    <property type="term" value="F:carboxy-lyase activity"/>
    <property type="evidence" value="ECO:0000314"/>
    <property type="project" value="UniProtKB"/>
</dbReference>
<dbReference type="GO" id="GO:0004470">
    <property type="term" value="F:malic enzyme activity"/>
    <property type="evidence" value="ECO:0007669"/>
    <property type="project" value="InterPro"/>
</dbReference>
<dbReference type="GO" id="GO:0043883">
    <property type="term" value="F:malolactic enzyme activity"/>
    <property type="evidence" value="ECO:0007669"/>
    <property type="project" value="UniProtKB-EC"/>
</dbReference>
<dbReference type="GO" id="GO:0030145">
    <property type="term" value="F:manganese ion binding"/>
    <property type="evidence" value="ECO:0000314"/>
    <property type="project" value="UniProtKB"/>
</dbReference>
<dbReference type="GO" id="GO:0051287">
    <property type="term" value="F:NAD binding"/>
    <property type="evidence" value="ECO:0000314"/>
    <property type="project" value="UniProtKB"/>
</dbReference>
<dbReference type="GO" id="GO:0016616">
    <property type="term" value="F:oxidoreductase activity, acting on the CH-OH group of donors, NAD or NADP as acceptor"/>
    <property type="evidence" value="ECO:0007669"/>
    <property type="project" value="InterPro"/>
</dbReference>
<dbReference type="GO" id="GO:0006108">
    <property type="term" value="P:malate metabolic process"/>
    <property type="evidence" value="ECO:0007669"/>
    <property type="project" value="TreeGrafter"/>
</dbReference>
<dbReference type="GO" id="GO:0043464">
    <property type="term" value="P:malolactic fermentation"/>
    <property type="evidence" value="ECO:0000314"/>
    <property type="project" value="UniProtKB"/>
</dbReference>
<dbReference type="FunFam" id="3.40.50.10380:FF:000001">
    <property type="entry name" value="NAD-dependent malic enzyme"/>
    <property type="match status" value="1"/>
</dbReference>
<dbReference type="FunFam" id="3.40.50.720:FF:000182">
    <property type="entry name" value="NAD-dependent malic enzyme"/>
    <property type="match status" value="1"/>
</dbReference>
<dbReference type="Gene3D" id="3.40.50.10380">
    <property type="entry name" value="Malic enzyme, N-terminal domain"/>
    <property type="match status" value="1"/>
</dbReference>
<dbReference type="Gene3D" id="3.40.50.720">
    <property type="entry name" value="NAD(P)-binding Rossmann-like Domain"/>
    <property type="match status" value="1"/>
</dbReference>
<dbReference type="InterPro" id="IPR046346">
    <property type="entry name" value="Aminoacid_DH-like_N_sf"/>
</dbReference>
<dbReference type="InterPro" id="IPR015884">
    <property type="entry name" value="Malic_enzyme_CS"/>
</dbReference>
<dbReference type="InterPro" id="IPR012301">
    <property type="entry name" value="Malic_N_dom"/>
</dbReference>
<dbReference type="InterPro" id="IPR037062">
    <property type="entry name" value="Malic_N_dom_sf"/>
</dbReference>
<dbReference type="InterPro" id="IPR012302">
    <property type="entry name" value="Malic_NAD-bd"/>
</dbReference>
<dbReference type="InterPro" id="IPR001891">
    <property type="entry name" value="Malic_OxRdtase"/>
</dbReference>
<dbReference type="InterPro" id="IPR048182">
    <property type="entry name" value="Malolactic_enz"/>
</dbReference>
<dbReference type="InterPro" id="IPR036291">
    <property type="entry name" value="NAD(P)-bd_dom_sf"/>
</dbReference>
<dbReference type="NCBIfam" id="NF041582">
    <property type="entry name" value="malolactic"/>
    <property type="match status" value="1"/>
</dbReference>
<dbReference type="NCBIfam" id="NF010052">
    <property type="entry name" value="PRK13529.1"/>
    <property type="match status" value="1"/>
</dbReference>
<dbReference type="PANTHER" id="PTHR23406">
    <property type="entry name" value="MALIC ENZYME-RELATED"/>
    <property type="match status" value="1"/>
</dbReference>
<dbReference type="PANTHER" id="PTHR23406:SF34">
    <property type="entry name" value="NAD-DEPENDENT MALIC ENZYME, MITOCHONDRIAL"/>
    <property type="match status" value="1"/>
</dbReference>
<dbReference type="Pfam" id="PF00390">
    <property type="entry name" value="malic"/>
    <property type="match status" value="1"/>
</dbReference>
<dbReference type="Pfam" id="PF03949">
    <property type="entry name" value="Malic_M"/>
    <property type="match status" value="1"/>
</dbReference>
<dbReference type="PIRSF" id="PIRSF000106">
    <property type="entry name" value="ME"/>
    <property type="match status" value="1"/>
</dbReference>
<dbReference type="PRINTS" id="PR00072">
    <property type="entry name" value="MALOXRDTASE"/>
</dbReference>
<dbReference type="SMART" id="SM01274">
    <property type="entry name" value="malic"/>
    <property type="match status" value="1"/>
</dbReference>
<dbReference type="SMART" id="SM00919">
    <property type="entry name" value="Malic_M"/>
    <property type="match status" value="1"/>
</dbReference>
<dbReference type="SUPFAM" id="SSF53223">
    <property type="entry name" value="Aminoacid dehydrogenase-like, N-terminal domain"/>
    <property type="match status" value="1"/>
</dbReference>
<dbReference type="SUPFAM" id="SSF51735">
    <property type="entry name" value="NAD(P)-binding Rossmann-fold domains"/>
    <property type="match status" value="1"/>
</dbReference>
<dbReference type="PROSITE" id="PS00331">
    <property type="entry name" value="MALIC_ENZYMES"/>
    <property type="match status" value="1"/>
</dbReference>
<reference key="1">
    <citation type="submission" date="2014-09" db="EMBL/GenBank/DDBJ databases">
        <title>Genome sequence of Leuconostoc mesenteroides P45 isolated from pulque, a traditional Mexican alcoholic fermented beverage.</title>
        <authorList>
            <person name="Riveros-Mckay F."/>
            <person name="Campos I."/>
            <person name="Giles-Gomez M."/>
            <person name="Bolivar F."/>
            <person name="Escalante A."/>
        </authorList>
    </citation>
    <scope>NUCLEOTIDE SEQUENCE [LARGE SCALE GENOMIC DNA]</scope>
    <source>
        <strain>P45</strain>
    </source>
</reference>
<reference key="2">
    <citation type="journal article" date="1982" name="Appl. Environ. Microbiol.">
        <title>Purification and Properties of a Malolactic Enzyme from a Strain of Leuconostoc mesenteroides Isolated from Grapes.</title>
        <authorList>
            <person name="Lonvaud-Funel A."/>
            <person name="de Saad A.M."/>
        </authorList>
    </citation>
    <scope>FUNCTION</scope>
    <scope>CATALYTIC ACTIVITY</scope>
    <scope>BIOPHYSICOCHEMICAL PROPERTIES</scope>
    <scope>COFACTOR</scope>
    <scope>ACTIVITY REGULATION</scope>
</reference>
<evidence type="ECO:0000250" key="1">
    <source>
        <dbReference type="UniProtKB" id="P40927"/>
    </source>
</evidence>
<evidence type="ECO:0000250" key="2">
    <source>
        <dbReference type="UniProtKB" id="Q48796"/>
    </source>
</evidence>
<evidence type="ECO:0000269" key="3">
    <source>
    </source>
</evidence>
<evidence type="ECO:0000303" key="4">
    <source>
    </source>
</evidence>
<evidence type="ECO:0000305" key="5"/>
<accession>A0A095AMW7</accession>
<protein>
    <recommendedName>
        <fullName evidence="4">Malolactic enzyme</fullName>
        <shortName evidence="4">MLE</shortName>
        <ecNumber evidence="3">4.1.1.101</ecNumber>
    </recommendedName>
</protein>
<gene>
    <name type="primary">mleS</name>
    <name type="ORF">LH61_04880</name>
</gene>
<organism>
    <name type="scientific">Leuconostoc mesenteroides</name>
    <dbReference type="NCBI Taxonomy" id="1245"/>
    <lineage>
        <taxon>Bacteria</taxon>
        <taxon>Bacillati</taxon>
        <taxon>Bacillota</taxon>
        <taxon>Bacilli</taxon>
        <taxon>Lactobacillales</taxon>
        <taxon>Lactobacillaceae</taxon>
        <taxon>Leuconostoc</taxon>
    </lineage>
</organism>
<name>MLES_LEUME</name>
<sequence length="542" mass="59205">MNTTGYDILRNPFLNKGTAFSEAERQQLGLTGTLPSQIQTIEEQAEQAYKQFQAKSPLLEKRIFLMNLFNENVTLFYHLMDQHVSEFMPIVYDPVVAESIEQYNEIYTNPQNAAFLSVDRPEDVENALKNAAAGRDIKLVVVTDAEGILGMGDWGVNGVDIAVGKLMVYTAAAGIDPATVLPVSIDAGTNNKELLHNPLYLGNKHERIAGEQYLEFIDKFVTAEQNLFPESLLHWEDFGRSNAQVILDKYKESIATFNDDIQGTGMIVLAGIFGALNISKQKLVDQKFVTFGAGTAGMGIVNQIFSELKQAGLSDDEARNHFYLVDKQGLLFDDTEGLTAAQKPFTRSRKEFVNPEQLINLETIVKELHPTVLIGTSTQPGTFTETIVKSMAENTERPIIFPLSNPTKLAEATAEDLIKWTGGKALVATGIPAADVDYKGVTYKIGQGNNALIYPGLGFGLVASTAKLLTQETISAAIHALGGLVDTDEPGAAVLPPVSNLTDFSQKIAEITAQSVVNQGLNREKIVDPKQAVQDAKWSAEY</sequence>
<feature type="chain" id="PRO_0000435672" description="Malolactic enzyme">
    <location>
        <begin position="1"/>
        <end position="542"/>
    </location>
</feature>
<feature type="active site" description="Proton donor" evidence="1">
    <location>
        <position position="92"/>
    </location>
</feature>
<feature type="active site" description="Proton acceptor" evidence="1">
    <location>
        <position position="165"/>
    </location>
</feature>
<feature type="binding site" evidence="1">
    <location>
        <position position="165"/>
    </location>
    <ligand>
        <name>substrate</name>
    </ligand>
</feature>
<feature type="binding site" evidence="1">
    <location>
        <position position="236"/>
    </location>
    <ligand>
        <name>Mn(2+)</name>
        <dbReference type="ChEBI" id="CHEBI:29035"/>
    </ligand>
</feature>
<feature type="binding site" evidence="1">
    <location>
        <position position="237"/>
    </location>
    <ligand>
        <name>Mn(2+)</name>
        <dbReference type="ChEBI" id="CHEBI:29035"/>
    </ligand>
</feature>
<feature type="binding site" evidence="1">
    <location>
        <position position="260"/>
    </location>
    <ligand>
        <name>Mn(2+)</name>
        <dbReference type="ChEBI" id="CHEBI:29035"/>
    </ligand>
</feature>
<feature type="binding site" evidence="1">
    <location>
        <begin position="293"/>
        <end position="296"/>
    </location>
    <ligand>
        <name>NAD(+)</name>
        <dbReference type="ChEBI" id="CHEBI:57540"/>
    </ligand>
</feature>
<feature type="binding site" evidence="1">
    <location>
        <position position="405"/>
    </location>
    <ligand>
        <name>NAD(+)</name>
        <dbReference type="ChEBI" id="CHEBI:57540"/>
    </ligand>
</feature>
<feature type="binding site" evidence="1">
    <location>
        <position position="450"/>
    </location>
    <ligand>
        <name>NAD(+)</name>
        <dbReference type="ChEBI" id="CHEBI:57540"/>
    </ligand>
</feature>
<feature type="binding site" evidence="1">
    <location>
        <position position="450"/>
    </location>
    <ligand>
        <name>substrate</name>
    </ligand>
</feature>
<comment type="function">
    <text evidence="3">Involved in the malolactic fermentation (MLF) of wine, which results in a natural decrease in acidity and favorable changes in wine flavors. Catalyzes the decarboxylation of L-malate to L-lactate.</text>
</comment>
<comment type="catalytic activity">
    <reaction evidence="3">
        <text>(S)-malate + H(+) = (S)-lactate + CO2</text>
        <dbReference type="Rhea" id="RHEA:46276"/>
        <dbReference type="ChEBI" id="CHEBI:15378"/>
        <dbReference type="ChEBI" id="CHEBI:15589"/>
        <dbReference type="ChEBI" id="CHEBI:16526"/>
        <dbReference type="ChEBI" id="CHEBI:16651"/>
        <dbReference type="EC" id="4.1.1.101"/>
    </reaction>
</comment>
<comment type="cofactor">
    <cofactor evidence="3">
        <name>Mn(2+)</name>
        <dbReference type="ChEBI" id="CHEBI:29035"/>
    </cofactor>
</comment>
<comment type="cofactor">
    <cofactor evidence="3">
        <name>NAD(+)</name>
        <dbReference type="ChEBI" id="CHEBI:57540"/>
    </cofactor>
</comment>
<comment type="activity regulation">
    <text evidence="3">Oxamate, fructose-1,6-diphosphate and L-lactate act as non-competitive inhibitors, whereas succinate, citrate and tartrate isomers produce a competitive inhibition.</text>
</comment>
<comment type="biophysicochemical properties">
    <kinetics>
        <KM evidence="3">0.043 mM for NAD</KM>
        <KM evidence="3">16.7 mM for (S)-malate</KM>
    </kinetics>
    <phDependence>
        <text evidence="3">Optimum pH is 4.35.</text>
    </phDependence>
</comment>
<comment type="subunit">
    <text evidence="2">Homodimer.</text>
</comment>
<comment type="similarity">
    <text evidence="5">Belongs to the malic enzymes family.</text>
</comment>
<proteinExistence type="evidence at protein level"/>